<keyword id="KW-0067">ATP-binding</keyword>
<keyword id="KW-0274">FAD</keyword>
<keyword id="KW-0285">Flavoprotein</keyword>
<keyword id="KW-0288">FMN</keyword>
<keyword id="KW-0547">Nucleotide-binding</keyword>
<keyword id="KW-0548">Nucleotidyltransferase</keyword>
<keyword id="KW-1185">Reference proteome</keyword>
<keyword id="KW-0808">Transferase</keyword>
<comment type="function">
    <text evidence="1">Catalyzes the transfer of the AMP portion of ATP to flavin mononucleotide (FMN) to produce flavin adenine dinucleotide (FAD) coenzyme.</text>
</comment>
<comment type="catalytic activity">
    <reaction evidence="1">
        <text>FMN + ATP + H(+) = FAD + diphosphate</text>
        <dbReference type="Rhea" id="RHEA:17237"/>
        <dbReference type="ChEBI" id="CHEBI:15378"/>
        <dbReference type="ChEBI" id="CHEBI:30616"/>
        <dbReference type="ChEBI" id="CHEBI:33019"/>
        <dbReference type="ChEBI" id="CHEBI:57692"/>
        <dbReference type="ChEBI" id="CHEBI:58210"/>
        <dbReference type="EC" id="2.7.7.2"/>
    </reaction>
</comment>
<comment type="cofactor">
    <cofactor evidence="1">
        <name>a divalent metal cation</name>
        <dbReference type="ChEBI" id="CHEBI:60240"/>
    </cofactor>
</comment>
<comment type="pathway">
    <text evidence="1">Cofactor biosynthesis; FAD biosynthesis; FAD from FMN: step 1/1.</text>
</comment>
<comment type="subunit">
    <text evidence="1">Homodimer.</text>
</comment>
<comment type="similarity">
    <text evidence="1">Belongs to the archaeal FAD synthase family.</text>
</comment>
<accession>C6A439</accession>
<evidence type="ECO:0000255" key="1">
    <source>
        <dbReference type="HAMAP-Rule" id="MF_02115"/>
    </source>
</evidence>
<feature type="chain" id="PRO_0000406285" description="FAD synthase">
    <location>
        <begin position="1"/>
        <end position="148"/>
    </location>
</feature>
<feature type="binding site" evidence="1">
    <location>
        <begin position="14"/>
        <end position="15"/>
    </location>
    <ligand>
        <name>ATP</name>
        <dbReference type="ChEBI" id="CHEBI:30616"/>
    </ligand>
</feature>
<feature type="binding site" evidence="1">
    <location>
        <begin position="19"/>
        <end position="22"/>
    </location>
    <ligand>
        <name>ATP</name>
        <dbReference type="ChEBI" id="CHEBI:30616"/>
    </ligand>
</feature>
<feature type="binding site" evidence="1">
    <location>
        <position position="100"/>
    </location>
    <ligand>
        <name>ATP</name>
        <dbReference type="ChEBI" id="CHEBI:30616"/>
    </ligand>
</feature>
<protein>
    <recommendedName>
        <fullName evidence="1">FAD synthase</fullName>
        <ecNumber evidence="1">2.7.7.2</ecNumber>
    </recommendedName>
    <alternativeName>
        <fullName evidence="1">FMN adenylyltransferase</fullName>
    </alternativeName>
    <alternativeName>
        <fullName evidence="1">Flavin adenine dinucleotide synthase</fullName>
    </alternativeName>
</protein>
<organism>
    <name type="scientific">Thermococcus sibiricus (strain DSM 12597 / MM 739)</name>
    <dbReference type="NCBI Taxonomy" id="604354"/>
    <lineage>
        <taxon>Archaea</taxon>
        <taxon>Methanobacteriati</taxon>
        <taxon>Methanobacteriota</taxon>
        <taxon>Thermococci</taxon>
        <taxon>Thermococcales</taxon>
        <taxon>Thermococcaceae</taxon>
        <taxon>Thermococcus</taxon>
    </lineage>
</organism>
<gene>
    <name evidence="1" type="primary">ribL</name>
    <name type="ordered locus">TSIB_1332</name>
</gene>
<sequence length="148" mass="16783">MTKKKKIRVVTGGVFDILHVGHIHFLKQAKELGDELVVIVAHDKTVEERKGRRPINSMYERAEVLKALKMVDEVVIGEPNCISFEIVKQLNPDIIALGPDQNFDVSALKEELKKKNINAEVIRIPYAYKSDVAKTSKIIQKIVETFCE</sequence>
<proteinExistence type="inferred from homology"/>
<dbReference type="EC" id="2.7.7.2" evidence="1"/>
<dbReference type="EMBL" id="CP001463">
    <property type="protein sequence ID" value="ACS90384.1"/>
    <property type="molecule type" value="Genomic_DNA"/>
</dbReference>
<dbReference type="RefSeq" id="WP_015849602.1">
    <property type="nucleotide sequence ID" value="NC_012883.1"/>
</dbReference>
<dbReference type="SMR" id="C6A439"/>
<dbReference type="STRING" id="604354.TSIB_1332"/>
<dbReference type="GeneID" id="8096333"/>
<dbReference type="KEGG" id="tsi:TSIB_1332"/>
<dbReference type="eggNOG" id="arCOG01222">
    <property type="taxonomic scope" value="Archaea"/>
</dbReference>
<dbReference type="HOGENOM" id="CLU_034585_2_1_2"/>
<dbReference type="OrthoDB" id="1912at2157"/>
<dbReference type="UniPathway" id="UPA00277">
    <property type="reaction ID" value="UER00407"/>
</dbReference>
<dbReference type="Proteomes" id="UP000009079">
    <property type="component" value="Chromosome"/>
</dbReference>
<dbReference type="GO" id="GO:0005524">
    <property type="term" value="F:ATP binding"/>
    <property type="evidence" value="ECO:0007669"/>
    <property type="project" value="UniProtKB-UniRule"/>
</dbReference>
<dbReference type="GO" id="GO:0003919">
    <property type="term" value="F:FMN adenylyltransferase activity"/>
    <property type="evidence" value="ECO:0007669"/>
    <property type="project" value="UniProtKB-UniRule"/>
</dbReference>
<dbReference type="GO" id="GO:0006747">
    <property type="term" value="P:FAD biosynthetic process"/>
    <property type="evidence" value="ECO:0007669"/>
    <property type="project" value="UniProtKB-UniRule"/>
</dbReference>
<dbReference type="GO" id="GO:0046444">
    <property type="term" value="P:FMN metabolic process"/>
    <property type="evidence" value="ECO:0007669"/>
    <property type="project" value="UniProtKB-UniRule"/>
</dbReference>
<dbReference type="Gene3D" id="3.40.50.620">
    <property type="entry name" value="HUPs"/>
    <property type="match status" value="1"/>
</dbReference>
<dbReference type="HAMAP" id="MF_02115">
    <property type="entry name" value="FAD_synth_arch"/>
    <property type="match status" value="1"/>
</dbReference>
<dbReference type="InterPro" id="IPR050385">
    <property type="entry name" value="Archaeal_FAD_synthase"/>
</dbReference>
<dbReference type="InterPro" id="IPR004821">
    <property type="entry name" value="Cyt_trans-like"/>
</dbReference>
<dbReference type="InterPro" id="IPR024902">
    <property type="entry name" value="FAD_synth_RibL"/>
</dbReference>
<dbReference type="InterPro" id="IPR014729">
    <property type="entry name" value="Rossmann-like_a/b/a_fold"/>
</dbReference>
<dbReference type="NCBIfam" id="TIGR00125">
    <property type="entry name" value="cyt_tran_rel"/>
    <property type="match status" value="1"/>
</dbReference>
<dbReference type="PANTHER" id="PTHR43793">
    <property type="entry name" value="FAD SYNTHASE"/>
    <property type="match status" value="1"/>
</dbReference>
<dbReference type="PANTHER" id="PTHR43793:SF1">
    <property type="entry name" value="FAD SYNTHASE"/>
    <property type="match status" value="1"/>
</dbReference>
<dbReference type="Pfam" id="PF01467">
    <property type="entry name" value="CTP_transf_like"/>
    <property type="match status" value="1"/>
</dbReference>
<dbReference type="SUPFAM" id="SSF52374">
    <property type="entry name" value="Nucleotidylyl transferase"/>
    <property type="match status" value="1"/>
</dbReference>
<reference key="1">
    <citation type="journal article" date="2009" name="Appl. Environ. Microbiol.">
        <title>Metabolic versatility and indigenous origin of the archaeon Thermococcus sibiricus, isolated from a siberian oil reservoir, as revealed by genome analysis.</title>
        <authorList>
            <person name="Mardanov A.V."/>
            <person name="Ravin N.V."/>
            <person name="Svetlitchnyi V.A."/>
            <person name="Beletsky A.V."/>
            <person name="Miroshnichenko M.L."/>
            <person name="Bonch-Osmolovskaya E.A."/>
            <person name="Skryabin K.G."/>
        </authorList>
    </citation>
    <scope>NUCLEOTIDE SEQUENCE [LARGE SCALE GENOMIC DNA]</scope>
    <source>
        <strain>DSM 12597 / MM 739</strain>
    </source>
</reference>
<name>RIBL_THESM</name>